<proteinExistence type="inferred from homology"/>
<evidence type="ECO:0000255" key="1">
    <source>
        <dbReference type="HAMAP-Rule" id="MF_00137"/>
    </source>
</evidence>
<feature type="chain" id="PRO_1000095998" description="Phosphoribosylaminoimidazole-succinocarboxamide synthase">
    <location>
        <begin position="1"/>
        <end position="238"/>
    </location>
</feature>
<comment type="catalytic activity">
    <reaction evidence="1">
        <text>5-amino-1-(5-phospho-D-ribosyl)imidazole-4-carboxylate + L-aspartate + ATP = (2S)-2-[5-amino-1-(5-phospho-beta-D-ribosyl)imidazole-4-carboxamido]succinate + ADP + phosphate + 2 H(+)</text>
        <dbReference type="Rhea" id="RHEA:22628"/>
        <dbReference type="ChEBI" id="CHEBI:15378"/>
        <dbReference type="ChEBI" id="CHEBI:29991"/>
        <dbReference type="ChEBI" id="CHEBI:30616"/>
        <dbReference type="ChEBI" id="CHEBI:43474"/>
        <dbReference type="ChEBI" id="CHEBI:58443"/>
        <dbReference type="ChEBI" id="CHEBI:77657"/>
        <dbReference type="ChEBI" id="CHEBI:456216"/>
        <dbReference type="EC" id="6.3.2.6"/>
    </reaction>
</comment>
<comment type="pathway">
    <text evidence="1">Purine metabolism; IMP biosynthesis via de novo pathway; 5-amino-1-(5-phospho-D-ribosyl)imidazole-4-carboxamide from 5-amino-1-(5-phospho-D-ribosyl)imidazole-4-carboxylate: step 1/2.</text>
</comment>
<comment type="similarity">
    <text evidence="1">Belongs to the SAICAR synthetase family.</text>
</comment>
<name>PUR7_NITOC</name>
<accession>Q3J871</accession>
<gene>
    <name evidence="1" type="primary">purC</name>
    <name type="ordered locus">Noc_2522</name>
</gene>
<dbReference type="EC" id="6.3.2.6" evidence="1"/>
<dbReference type="EMBL" id="CP000127">
    <property type="protein sequence ID" value="ABA58975.1"/>
    <property type="molecule type" value="Genomic_DNA"/>
</dbReference>
<dbReference type="RefSeq" id="WP_004269124.1">
    <property type="nucleotide sequence ID" value="NC_007484.1"/>
</dbReference>
<dbReference type="SMR" id="Q3J871"/>
<dbReference type="FunCoup" id="Q3J871">
    <property type="interactions" value="495"/>
</dbReference>
<dbReference type="STRING" id="323261.Noc_2522"/>
<dbReference type="KEGG" id="noc:Noc_2522"/>
<dbReference type="eggNOG" id="COG0152">
    <property type="taxonomic scope" value="Bacteria"/>
</dbReference>
<dbReference type="HOGENOM" id="CLU_061495_2_0_6"/>
<dbReference type="InParanoid" id="Q3J871"/>
<dbReference type="UniPathway" id="UPA00074">
    <property type="reaction ID" value="UER00131"/>
</dbReference>
<dbReference type="Proteomes" id="UP000006838">
    <property type="component" value="Chromosome"/>
</dbReference>
<dbReference type="GO" id="GO:0005829">
    <property type="term" value="C:cytosol"/>
    <property type="evidence" value="ECO:0007669"/>
    <property type="project" value="TreeGrafter"/>
</dbReference>
<dbReference type="GO" id="GO:0005524">
    <property type="term" value="F:ATP binding"/>
    <property type="evidence" value="ECO:0007669"/>
    <property type="project" value="UniProtKB-KW"/>
</dbReference>
<dbReference type="GO" id="GO:0004639">
    <property type="term" value="F:phosphoribosylaminoimidazolesuccinocarboxamide synthase activity"/>
    <property type="evidence" value="ECO:0007669"/>
    <property type="project" value="UniProtKB-UniRule"/>
</dbReference>
<dbReference type="GO" id="GO:0006189">
    <property type="term" value="P:'de novo' IMP biosynthetic process"/>
    <property type="evidence" value="ECO:0007669"/>
    <property type="project" value="UniProtKB-UniRule"/>
</dbReference>
<dbReference type="GO" id="GO:0009236">
    <property type="term" value="P:cobalamin biosynthetic process"/>
    <property type="evidence" value="ECO:0007669"/>
    <property type="project" value="InterPro"/>
</dbReference>
<dbReference type="CDD" id="cd01415">
    <property type="entry name" value="SAICAR_synt_PurC"/>
    <property type="match status" value="1"/>
</dbReference>
<dbReference type="FunFam" id="3.30.200.20:FF:000086">
    <property type="entry name" value="Phosphoribosylaminoimidazole-succinocarboxamide synthase"/>
    <property type="match status" value="1"/>
</dbReference>
<dbReference type="FunFam" id="3.30.470.20:FF:000006">
    <property type="entry name" value="Phosphoribosylaminoimidazole-succinocarboxamide synthase"/>
    <property type="match status" value="1"/>
</dbReference>
<dbReference type="Gene3D" id="3.30.470.20">
    <property type="entry name" value="ATP-grasp fold, B domain"/>
    <property type="match status" value="1"/>
</dbReference>
<dbReference type="Gene3D" id="3.30.200.20">
    <property type="entry name" value="Phosphorylase Kinase, domain 1"/>
    <property type="match status" value="1"/>
</dbReference>
<dbReference type="HAMAP" id="MF_00137">
    <property type="entry name" value="SAICAR_synth"/>
    <property type="match status" value="1"/>
</dbReference>
<dbReference type="InterPro" id="IPR028923">
    <property type="entry name" value="SAICAR_synt/ADE2_N"/>
</dbReference>
<dbReference type="InterPro" id="IPR033934">
    <property type="entry name" value="SAICAR_synt_PurC"/>
</dbReference>
<dbReference type="InterPro" id="IPR001636">
    <property type="entry name" value="SAICAR_synth"/>
</dbReference>
<dbReference type="InterPro" id="IPR050089">
    <property type="entry name" value="SAICAR_synthetase"/>
</dbReference>
<dbReference type="InterPro" id="IPR018236">
    <property type="entry name" value="SAICAR_synthetase_CS"/>
</dbReference>
<dbReference type="NCBIfam" id="TIGR00081">
    <property type="entry name" value="purC"/>
    <property type="match status" value="1"/>
</dbReference>
<dbReference type="PANTHER" id="PTHR43599">
    <property type="entry name" value="MULTIFUNCTIONAL PROTEIN ADE2"/>
    <property type="match status" value="1"/>
</dbReference>
<dbReference type="PANTHER" id="PTHR43599:SF3">
    <property type="entry name" value="SI:DKEY-6E2.2"/>
    <property type="match status" value="1"/>
</dbReference>
<dbReference type="Pfam" id="PF01259">
    <property type="entry name" value="SAICAR_synt"/>
    <property type="match status" value="1"/>
</dbReference>
<dbReference type="SUPFAM" id="SSF56104">
    <property type="entry name" value="SAICAR synthase-like"/>
    <property type="match status" value="1"/>
</dbReference>
<dbReference type="PROSITE" id="PS01057">
    <property type="entry name" value="SAICAR_SYNTHETASE_1"/>
    <property type="match status" value="1"/>
</dbReference>
<dbReference type="PROSITE" id="PS01058">
    <property type="entry name" value="SAICAR_SYNTHETASE_2"/>
    <property type="match status" value="1"/>
</dbReference>
<sequence length="238" mass="27470">MATKKQSELYSGKAKTVYITDDPTQLILYFRDDTSAFDGKKIERFSRKGEINNKFNAFIMEKLAAAGIPTHFERLLSEQESLVKRLEMFPIECVVRNIATGSLCRRLGVQDGLDLDPPVFEFFLKDDARHDPMINEYHIRTFGWANPKQVEQMKEYTFRINDILKVLFLEAGLLLVDYKLEFGDVQGQVLLGDEFTPDGCRLWDVKTREKLDKDRFRHGLGGVTEAYEEVARRLGMSL</sequence>
<organism>
    <name type="scientific">Nitrosococcus oceani (strain ATCC 19707 / BCRC 17464 / JCM 30415 / NCIMB 11848 / C-107)</name>
    <dbReference type="NCBI Taxonomy" id="323261"/>
    <lineage>
        <taxon>Bacteria</taxon>
        <taxon>Pseudomonadati</taxon>
        <taxon>Pseudomonadota</taxon>
        <taxon>Gammaproteobacteria</taxon>
        <taxon>Chromatiales</taxon>
        <taxon>Chromatiaceae</taxon>
        <taxon>Nitrosococcus</taxon>
    </lineage>
</organism>
<keyword id="KW-0067">ATP-binding</keyword>
<keyword id="KW-0436">Ligase</keyword>
<keyword id="KW-0547">Nucleotide-binding</keyword>
<keyword id="KW-0658">Purine biosynthesis</keyword>
<keyword id="KW-1185">Reference proteome</keyword>
<protein>
    <recommendedName>
        <fullName evidence="1">Phosphoribosylaminoimidazole-succinocarboxamide synthase</fullName>
        <ecNumber evidence="1">6.3.2.6</ecNumber>
    </recommendedName>
    <alternativeName>
        <fullName evidence="1">SAICAR synthetase</fullName>
    </alternativeName>
</protein>
<reference key="1">
    <citation type="journal article" date="2006" name="Appl. Environ. Microbiol.">
        <title>Complete genome sequence of the marine, chemolithoautotrophic, ammonia-oxidizing bacterium Nitrosococcus oceani ATCC 19707.</title>
        <authorList>
            <person name="Klotz M.G."/>
            <person name="Arp D.J."/>
            <person name="Chain P.S.G."/>
            <person name="El-Sheikh A.F."/>
            <person name="Hauser L.J."/>
            <person name="Hommes N.G."/>
            <person name="Larimer F.W."/>
            <person name="Malfatti S.A."/>
            <person name="Norton J.M."/>
            <person name="Poret-Peterson A.T."/>
            <person name="Vergez L.M."/>
            <person name="Ward B.B."/>
        </authorList>
    </citation>
    <scope>NUCLEOTIDE SEQUENCE [LARGE SCALE GENOMIC DNA]</scope>
    <source>
        <strain>ATCC 19707 / BCRC 17464 / JCM 30415 / NCIMB 11848 / C-107</strain>
    </source>
</reference>